<protein>
    <recommendedName>
        <fullName evidence="1">Pole-localizer protein TmaR</fullName>
    </recommendedName>
</protein>
<name>TMAR_ECOLC</name>
<dbReference type="EMBL" id="CP000946">
    <property type="protein sequence ID" value="ACA77291.1"/>
    <property type="molecule type" value="Genomic_DNA"/>
</dbReference>
<dbReference type="RefSeq" id="WP_000450409.1">
    <property type="nucleotide sequence ID" value="NZ_MTFT01000023.1"/>
</dbReference>
<dbReference type="SMR" id="B1IZQ6"/>
<dbReference type="KEGG" id="ecl:EcolC_1633"/>
<dbReference type="HOGENOM" id="CLU_153146_0_0_6"/>
<dbReference type="GO" id="GO:0005829">
    <property type="term" value="C:cytosol"/>
    <property type="evidence" value="ECO:0007669"/>
    <property type="project" value="TreeGrafter"/>
</dbReference>
<dbReference type="HAMAP" id="MF_00683">
    <property type="entry name" value="Pole_loc_TmaR"/>
    <property type="match status" value="1"/>
</dbReference>
<dbReference type="InterPro" id="IPR007458">
    <property type="entry name" value="DUF496"/>
</dbReference>
<dbReference type="InterPro" id="IPR053375">
    <property type="entry name" value="UPF0265"/>
</dbReference>
<dbReference type="NCBIfam" id="NF003844">
    <property type="entry name" value="PRK05423.1"/>
    <property type="match status" value="1"/>
</dbReference>
<dbReference type="NCBIfam" id="NF040881">
    <property type="entry name" value="PTS_reg_TmaR"/>
    <property type="match status" value="1"/>
</dbReference>
<dbReference type="PANTHER" id="PTHR39591">
    <property type="entry name" value="UPF0265 PROTEIN YEEX"/>
    <property type="match status" value="1"/>
</dbReference>
<dbReference type="PANTHER" id="PTHR39591:SF1">
    <property type="entry name" value="UPF0265 PROTEIN YEEX"/>
    <property type="match status" value="1"/>
</dbReference>
<dbReference type="Pfam" id="PF04363">
    <property type="entry name" value="DUF496"/>
    <property type="match status" value="1"/>
</dbReference>
<dbReference type="PIRSF" id="PIRSF028773">
    <property type="entry name" value="UCP028773"/>
    <property type="match status" value="1"/>
</dbReference>
<feature type="chain" id="PRO_1000083058" description="Pole-localizer protein TmaR">
    <location>
        <begin position="1"/>
        <end position="109"/>
    </location>
</feature>
<feature type="coiled-coil region" evidence="1">
    <location>
        <begin position="14"/>
        <end position="41"/>
    </location>
</feature>
<sequence length="109" mass="12778">METTKPSFQDVLEFVRLFRRKNKLQREIQDVEKKIRDNQKRVLLLDNLSDYIKPGMSVEAIQGIIASMKGDYEDRVDDYIIKNAELSKERRDISKKLKAMGEMKNGEAK</sequence>
<evidence type="ECO:0000255" key="1">
    <source>
        <dbReference type="HAMAP-Rule" id="MF_00683"/>
    </source>
</evidence>
<accession>B1IZQ6</accession>
<gene>
    <name evidence="1" type="primary">tmaR</name>
    <name type="ordered locus">EcolC_1633</name>
</gene>
<organism>
    <name type="scientific">Escherichia coli (strain ATCC 8739 / DSM 1576 / NBRC 3972 / NCIMB 8545 / WDCM 00012 / Crooks)</name>
    <dbReference type="NCBI Taxonomy" id="481805"/>
    <lineage>
        <taxon>Bacteria</taxon>
        <taxon>Pseudomonadati</taxon>
        <taxon>Pseudomonadota</taxon>
        <taxon>Gammaproteobacteria</taxon>
        <taxon>Enterobacterales</taxon>
        <taxon>Enterobacteriaceae</taxon>
        <taxon>Escherichia</taxon>
    </lineage>
</organism>
<comment type="function">
    <text evidence="1">Pole-localizer protein involved in the regulation of several cellular processes.</text>
</comment>
<comment type="subcellular location">
    <subcellularLocation>
        <location evidence="1">Cytoplasm</location>
    </subcellularLocation>
    <text evidence="1">Forms clusters that localize mainly near one pole of the cell.</text>
</comment>
<comment type="similarity">
    <text evidence="1">Belongs to the pole-localizer TmaR family.</text>
</comment>
<reference key="1">
    <citation type="submission" date="2008-02" db="EMBL/GenBank/DDBJ databases">
        <title>Complete sequence of Escherichia coli C str. ATCC 8739.</title>
        <authorList>
            <person name="Copeland A."/>
            <person name="Lucas S."/>
            <person name="Lapidus A."/>
            <person name="Glavina del Rio T."/>
            <person name="Dalin E."/>
            <person name="Tice H."/>
            <person name="Bruce D."/>
            <person name="Goodwin L."/>
            <person name="Pitluck S."/>
            <person name="Kiss H."/>
            <person name="Brettin T."/>
            <person name="Detter J.C."/>
            <person name="Han C."/>
            <person name="Kuske C.R."/>
            <person name="Schmutz J."/>
            <person name="Larimer F."/>
            <person name="Land M."/>
            <person name="Hauser L."/>
            <person name="Kyrpides N."/>
            <person name="Mikhailova N."/>
            <person name="Ingram L."/>
            <person name="Richardson P."/>
        </authorList>
    </citation>
    <scope>NUCLEOTIDE SEQUENCE [LARGE SCALE GENOMIC DNA]</scope>
    <source>
        <strain>ATCC 8739 / DSM 1576 / NBRC 3972 / NCIMB 8545 / WDCM 00012 / Crooks</strain>
    </source>
</reference>
<proteinExistence type="inferred from homology"/>
<keyword id="KW-0175">Coiled coil</keyword>
<keyword id="KW-0963">Cytoplasm</keyword>